<accession>Q60748</accession>
<accession>B9EHB5</accession>
<accession>Q5GL24</accession>
<accession>Q60783</accession>
<accession>Q60808</accession>
<reference key="1">
    <citation type="journal article" date="1995" name="Proc. Natl. Acad. Sci. U.S.A.">
        <title>Identification of a second corticotropin-releasing factor receptor gene and characterization of a cDNA expressed in heart.</title>
        <authorList>
            <person name="Perrin M."/>
            <person name="Donaldson C."/>
            <person name="Chen R."/>
            <person name="Blount A."/>
            <person name="Berggren T."/>
            <person name="Bilezikjian L."/>
            <person name="Sawchenko P."/>
            <person name="Vale W."/>
        </authorList>
    </citation>
    <scope>NUCLEOTIDE SEQUENCE [MRNA] (ISOFORM CRF2-BETA)</scope>
    <source>
        <tissue>Heart</tissue>
    </source>
</reference>
<reference key="2">
    <citation type="journal article" date="1995" name="Proc. Natl. Acad. Sci. U.S.A.">
        <title>A sauvagine/corticotropin-releasing factor receptor expressed in heart and skeletal muscle.</title>
        <authorList>
            <person name="Kishimoto T."/>
            <person name="Pearse R.V. II"/>
            <person name="Lin C.R."/>
            <person name="Rosenfeld M.G."/>
        </authorList>
    </citation>
    <scope>NUCLEOTIDE SEQUENCE [MRNA] (ISOFORM CRF2-BETA)</scope>
    <source>
        <strain>BALB/cJ</strain>
        <tissue>Heart</tissue>
    </source>
</reference>
<reference key="3">
    <citation type="journal article" date="1995" name="Mol. Endocrinol.">
        <title>Identification of a novel murine receptor for corticotropin-releasing hormone expressed in the heart.</title>
        <authorList>
            <person name="Stenzel P."/>
            <person name="Kesterson R."/>
            <person name="Yeung W."/>
            <person name="Cone R.D."/>
            <person name="Rittenberg M.B."/>
            <person name="Stenzel-Poore M.P."/>
        </authorList>
    </citation>
    <scope>NUCLEOTIDE SEQUENCE [MRNA] (ISOFORM CRF2-BETA)</scope>
    <source>
        <strain>BALB/cJ</strain>
        <tissue>Heart</tissue>
    </source>
</reference>
<reference key="4">
    <citation type="journal article" date="2005" name="Mol. Endocrinol.">
        <title>Mouse corticotropin-releasing factor receptor type 2alpha gene: isolation, distribution, pharmacological characterization and regulation by stress and glucocorticoids.</title>
        <authorList>
            <person name="Chen A."/>
            <person name="Perrin M."/>
            <person name="Brar B."/>
            <person name="Li C."/>
            <person name="Jamieson P."/>
            <person name="DiGruccio M."/>
            <person name="Lewis K."/>
            <person name="Vale W."/>
        </authorList>
    </citation>
    <scope>NUCLEOTIDE SEQUENCE [MRNA] (ISOFORM CRF2-ALPHA)</scope>
    <source>
        <strain>C57BL/6 X 129</strain>
    </source>
</reference>
<reference key="5">
    <citation type="journal article" date="2004" name="Genome Res.">
        <title>The status, quality, and expansion of the NIH full-length cDNA project: the Mammalian Gene Collection (MGC).</title>
        <authorList>
            <consortium name="The MGC Project Team"/>
        </authorList>
    </citation>
    <scope>NUCLEOTIDE SEQUENCE [LARGE SCALE MRNA] (ISOFORM CRF2-BETA)</scope>
    <source>
        <tissue>Brain</tissue>
    </source>
</reference>
<reference key="6">
    <citation type="journal article" date="2004" name="Proc. Natl. Acad. Sci. U.S.A.">
        <title>NMR structure and peptide hormone binding site of the first extracellular domain of a type B1 G protein-coupled receptor.</title>
        <authorList>
            <person name="Grace C.R."/>
            <person name="Perrin M.H."/>
            <person name="DiGruccio M.R."/>
            <person name="Miller C.L."/>
            <person name="Rivier J.E."/>
            <person name="Vale W.W."/>
            <person name="Riek R."/>
        </authorList>
    </citation>
    <scope>STRUCTURE BY NMR OF 39-133 (ISOFORM CRF2-BETA)</scope>
    <scope>DISULFIDE BONDS</scope>
</reference>
<reference key="7">
    <citation type="journal article" date="2006" name="Ann. N. Y. Acad. Sci.">
        <title>The three-dimensional structure of the N-terminal domain of corticotropin-releasing factor receptors: sushi domains and the B1 family of G protein-coupled receptors.</title>
        <authorList>
            <person name="Perrin M.H."/>
            <person name="Grace C.R."/>
            <person name="Riek R."/>
            <person name="Vale W.W."/>
        </authorList>
    </citation>
    <scope>STRUCTURE BY NMR OF 39-133 (ISOFORM CRF2-BETA) IN COMPLEX WITH PEPTIDE LIGAND</scope>
    <scope>DISULFIDE BONDS</scope>
    <scope>MUTAGENESIS OF ASP-45</scope>
</reference>
<reference key="8">
    <citation type="journal article" date="2007" name="Proc. Natl. Acad. Sci. U.S.A.">
        <title>Structure of the N-terminal domain of a type B1 G protein-coupled receptor in complex with a peptide ligand.</title>
        <authorList>
            <person name="Grace C.R."/>
            <person name="Perrin M.H."/>
            <person name="Gulyas J."/>
            <person name="Digruccio M.R."/>
            <person name="Cantle J.P."/>
            <person name="Rivier J.E."/>
            <person name="Vale W.W."/>
            <person name="Riek R."/>
        </authorList>
    </citation>
    <scope>STRUCTURE BY NMR OF 39-133 (ISOFORM CRF2-BETA) IN COMPLEX WITH PEPTIDE LIGAND</scope>
    <scope>DISULFIDE BONDS</scope>
</reference>
<sequence>MDAALLLSLLEANCSLALAEELLLDGWGVPPDPEGPYTYCNTTLDQIGTCWPQSAPGALVERPCPEYFNGIKYNTTRNAYRECLENGTWASRVNYSHCEPILDDKQRKYDLHYRIALIVNYLGHCVSVVALVAAFLLFLVLRSIRCLRNVIHWNLITTFILRNIAWFLLQLIDHEVHEGNEVWCRCITTIFNYFVVTNFFWMFVEGCYLHTAIVMTYSTEHLRKWLFLFIGWCIPCPIIIAWAVGKLYYENEQCWFGKEAGDLVDYIYQGPVMLVLLINFVFLFNIVRILMTKLRASTTSETIQYRKAVKATLVLLPLLGITYMLFFVNPGEDDLSQIVFIYFNSFLQSFQGFFVSVFYCFFNGEVRAALRKRWHRWQDHHALRVPVARAMSIPTSPTRISFHSIKQTAAV</sequence>
<feature type="chain" id="PRO_0000012821" description="Corticotropin-releasing factor receptor 2">
    <location>
        <begin position="1"/>
        <end position="411"/>
    </location>
</feature>
<feature type="signal peptide" description="Not cleaved" evidence="1">
    <location>
        <begin position="1"/>
        <end position="19"/>
    </location>
</feature>
<feature type="topological domain" description="Extracellular" evidence="1">
    <location>
        <begin position="1"/>
        <end position="108"/>
    </location>
</feature>
<feature type="transmembrane region" description="Helical; Name=1" evidence="1">
    <location>
        <begin position="109"/>
        <end position="139"/>
    </location>
</feature>
<feature type="topological domain" description="Cytoplasmic" evidence="1">
    <location>
        <begin position="140"/>
        <end position="146"/>
    </location>
</feature>
<feature type="transmembrane region" description="Helical; Name=2" evidence="1">
    <location>
        <begin position="147"/>
        <end position="171"/>
    </location>
</feature>
<feature type="topological domain" description="Extracellular" evidence="1">
    <location>
        <begin position="172"/>
        <end position="185"/>
    </location>
</feature>
<feature type="transmembrane region" description="Helical; Name=3" evidence="1">
    <location>
        <begin position="186"/>
        <end position="214"/>
    </location>
</feature>
<feature type="topological domain" description="Cytoplasmic" evidence="1">
    <location>
        <begin position="215"/>
        <end position="221"/>
    </location>
</feature>
<feature type="transmembrane region" description="Helical; Name=4" evidence="1">
    <location>
        <begin position="222"/>
        <end position="249"/>
    </location>
</feature>
<feature type="topological domain" description="Extracellular" evidence="1">
    <location>
        <begin position="250"/>
        <end position="265"/>
    </location>
</feature>
<feature type="transmembrane region" description="Helical; Name=5" evidence="1">
    <location>
        <begin position="266"/>
        <end position="291"/>
    </location>
</feature>
<feature type="topological domain" description="Cytoplasmic" evidence="1">
    <location>
        <begin position="292"/>
        <end position="302"/>
    </location>
</feature>
<feature type="transmembrane region" description="Helical; Name=6" evidence="1">
    <location>
        <begin position="303"/>
        <end position="327"/>
    </location>
</feature>
<feature type="topological domain" description="Extracellular" evidence="1">
    <location>
        <begin position="328"/>
        <end position="334"/>
    </location>
</feature>
<feature type="transmembrane region" description="Helical; Name=7" evidence="1">
    <location>
        <begin position="335"/>
        <end position="364"/>
    </location>
</feature>
<feature type="topological domain" description="Cytoplasmic" evidence="1">
    <location>
        <begin position="365"/>
        <end position="411"/>
    </location>
</feature>
<feature type="glycosylation site" description="N-linked (GlcNAc...) asparagine" evidence="2">
    <location>
        <position position="13"/>
    </location>
</feature>
<feature type="glycosylation site" description="N-linked (GlcNAc...) asparagine" evidence="2">
    <location>
        <position position="41"/>
    </location>
</feature>
<feature type="glycosylation site" description="N-linked (GlcNAc...) asparagine" evidence="2">
    <location>
        <position position="74"/>
    </location>
</feature>
<feature type="glycosylation site" description="N-linked (GlcNAc...) asparagine" evidence="2">
    <location>
        <position position="86"/>
    </location>
</feature>
<feature type="glycosylation site" description="N-linked (GlcNAc...) asparagine" evidence="2">
    <location>
        <position position="94"/>
    </location>
</feature>
<feature type="disulfide bond" evidence="1">
    <location>
        <begin position="14"/>
        <end position="50"/>
    </location>
</feature>
<feature type="disulfide bond">
    <location>
        <begin position="40"/>
        <end position="83"/>
    </location>
</feature>
<feature type="disulfide bond">
    <location>
        <begin position="64"/>
        <end position="98"/>
    </location>
</feature>
<feature type="disulfide bond" evidence="1">
    <location>
        <begin position="184"/>
        <end position="254"/>
    </location>
</feature>
<feature type="splice variant" id="VSP_053568" description="In isoform CRF2-beta." evidence="4 5 6 7">
    <original>MDAALLLSLLEANCSLALAEELLLDGWGVPPDPE</original>
    <variation>MGTPGSLPSAQLLLCLFSLLPVLQVAQPGQAPQDQPLWTLLEQYCHRTTIGNFS</variation>
    <location>
        <begin position="1"/>
        <end position="34"/>
    </location>
</feature>
<feature type="mutagenesis site" description="Disrupts internal salt bridge and abrogates ligand recognition." evidence="3">
    <original>D</original>
    <variation>A</variation>
    <location>
        <position position="45"/>
    </location>
</feature>
<feature type="sequence conflict" description="In Ref. 3; AAC52243." evidence="8" ref="3">
    <location>
        <position position="106"/>
    </location>
</feature>
<feature type="sequence conflict" description="In Ref. 3; AAC52243." evidence="8" ref="3">
    <original>KR</original>
    <variation>NG</variation>
    <location>
        <begin position="372"/>
        <end position="373"/>
    </location>
</feature>
<feature type="sequence conflict" description="In Ref. 2; AAC52174." evidence="8" ref="2">
    <original>RW</original>
    <variation>SG</variation>
    <location>
        <begin position="376"/>
        <end position="377"/>
    </location>
</feature>
<feature type="sequence conflict" description="In Ref. 2; AAC52174." evidence="8" ref="2">
    <original>A</original>
    <variation>R</variation>
    <location>
        <position position="388"/>
    </location>
</feature>
<feature type="strand" evidence="9">
    <location>
        <begin position="46"/>
        <end position="48"/>
    </location>
</feature>
<feature type="strand" evidence="10">
    <location>
        <begin position="58"/>
        <end position="63"/>
    </location>
</feature>
<feature type="strand" evidence="9">
    <location>
        <begin position="69"/>
        <end position="71"/>
    </location>
</feature>
<feature type="strand" evidence="10">
    <location>
        <begin position="78"/>
        <end position="83"/>
    </location>
</feature>
<feature type="turn" evidence="10">
    <location>
        <begin position="85"/>
        <end position="87"/>
    </location>
</feature>
<feature type="strand" evidence="9">
    <location>
        <begin position="97"/>
        <end position="99"/>
    </location>
</feature>
<feature type="sequence conflict" description="In Ref. 2; AAC52174." evidence="8" ref="2">
    <original>TPG</original>
    <variation>QQI</variation>
    <location sequence="Q60748-2">
        <begin position="3"/>
        <end position="5"/>
    </location>
</feature>
<name>CRFR2_MOUSE</name>
<gene>
    <name type="primary">Crhr2</name>
    <name type="synonym">Crf2r</name>
</gene>
<comment type="function">
    <text>G-protein coupled receptor for CRH (corticotropin-releasing factor), UCN (urocortin), UCN2 and UCN3. Has high affinity for UCN. Ligand binding causes a conformation change that triggers signaling via guanine nucleotide-binding proteins (G proteins) and down-stream effectors, such as adenylate cyclase. Promotes the activation of adenylate cyclase, leading to increased intracellular cAMP levels.</text>
</comment>
<comment type="subunit">
    <text evidence="1">Monomer. Interacts with CRF, UCN, UCN2 and UCN3 (By similarity).</text>
</comment>
<comment type="subcellular location">
    <subcellularLocation>
        <location>Cell membrane</location>
        <topology>Multi-pass membrane protein</topology>
    </subcellularLocation>
</comment>
<comment type="alternative products">
    <event type="alternative splicing"/>
    <isoform>
        <id>Q60748-1</id>
        <name>CRF2-alpha</name>
        <sequence type="displayed"/>
    </isoform>
    <isoform>
        <id>Q60748-2</id>
        <name>CRF2-beta</name>
        <sequence type="described" ref="VSP_053568"/>
    </isoform>
</comment>
<comment type="tissue specificity">
    <text>Highly expressed in the heart. Also expressed in lungs, skeletal muscle, gastrointestinal tract, epididymis, and brain.</text>
</comment>
<comment type="domain">
    <text evidence="1">The transmembrane domain is composed of seven transmembrane helices that are arranged in V-shape. Transmembrane helix 7 assumes a sharply kinked structure (By similarity).</text>
</comment>
<comment type="domain">
    <text evidence="1">The uncleaved pseudo signal peptide prevents receptor's oligomerization and coupling to G(i) subunits. It is also responsible for the rather low receptor localization at the plasma membrane (By similarity).</text>
</comment>
<comment type="PTM">
    <text evidence="1">A N-glycosylation site within the signal peptide impedes its proper cleavage and function.</text>
</comment>
<comment type="miscellaneous">
    <molecule>Isoform CRF2-beta</molecule>
    <text evidence="8">Contains a disulfide bond in positions 45-70.</text>
</comment>
<comment type="similarity">
    <text evidence="8">Belongs to the G-protein coupled receptor 2 family.</text>
</comment>
<proteinExistence type="evidence at protein level"/>
<keyword id="KW-0002">3D-structure</keyword>
<keyword id="KW-0025">Alternative splicing</keyword>
<keyword id="KW-1003">Cell membrane</keyword>
<keyword id="KW-1015">Disulfide bond</keyword>
<keyword id="KW-0297">G-protein coupled receptor</keyword>
<keyword id="KW-0325">Glycoprotein</keyword>
<keyword id="KW-0472">Membrane</keyword>
<keyword id="KW-0675">Receptor</keyword>
<keyword id="KW-1185">Reference proteome</keyword>
<keyword id="KW-0732">Signal</keyword>
<keyword id="KW-0807">Transducer</keyword>
<keyword id="KW-0812">Transmembrane</keyword>
<keyword id="KW-1133">Transmembrane helix</keyword>
<organism>
    <name type="scientific">Mus musculus</name>
    <name type="common">Mouse</name>
    <dbReference type="NCBI Taxonomy" id="10090"/>
    <lineage>
        <taxon>Eukaryota</taxon>
        <taxon>Metazoa</taxon>
        <taxon>Chordata</taxon>
        <taxon>Craniata</taxon>
        <taxon>Vertebrata</taxon>
        <taxon>Euteleostomi</taxon>
        <taxon>Mammalia</taxon>
        <taxon>Eutheria</taxon>
        <taxon>Euarchontoglires</taxon>
        <taxon>Glires</taxon>
        <taxon>Rodentia</taxon>
        <taxon>Myomorpha</taxon>
        <taxon>Muroidea</taxon>
        <taxon>Muridae</taxon>
        <taxon>Murinae</taxon>
        <taxon>Mus</taxon>
        <taxon>Mus</taxon>
    </lineage>
</organism>
<protein>
    <recommendedName>
        <fullName>Corticotropin-releasing factor receptor 2</fullName>
        <shortName>CRF-R-2</shortName>
        <shortName>CRF-R2</shortName>
        <shortName>CRFR-2</shortName>
    </recommendedName>
    <alternativeName>
        <fullName>CRF-RB</fullName>
    </alternativeName>
    <alternativeName>
        <fullName>Corticotropin-releasing hormone receptor 2</fullName>
        <shortName>CRH-R-2</shortName>
        <shortName>CRH-R2</shortName>
    </alternativeName>
</protein>
<evidence type="ECO:0000250" key="1"/>
<evidence type="ECO:0000255" key="2"/>
<evidence type="ECO:0000269" key="3">
    <source>
    </source>
</evidence>
<evidence type="ECO:0000303" key="4">
    <source>
    </source>
</evidence>
<evidence type="ECO:0000303" key="5">
    <source>
    </source>
</evidence>
<evidence type="ECO:0000303" key="6">
    <source>
    </source>
</evidence>
<evidence type="ECO:0000303" key="7">
    <source>
    </source>
</evidence>
<evidence type="ECO:0000305" key="8"/>
<evidence type="ECO:0007829" key="9">
    <source>
        <dbReference type="PDB" id="1U34"/>
    </source>
</evidence>
<evidence type="ECO:0007829" key="10">
    <source>
        <dbReference type="PDB" id="2JNC"/>
    </source>
</evidence>
<dbReference type="EMBL" id="U17858">
    <property type="protein sequence ID" value="AAA68026.1"/>
    <property type="molecule type" value="mRNA"/>
</dbReference>
<dbReference type="EMBL" id="U21729">
    <property type="protein sequence ID" value="AAC52174.1"/>
    <property type="molecule type" value="mRNA"/>
</dbReference>
<dbReference type="EMBL" id="U19939">
    <property type="protein sequence ID" value="AAC52243.1"/>
    <property type="molecule type" value="mRNA"/>
</dbReference>
<dbReference type="EMBL" id="AY445512">
    <property type="protein sequence ID" value="AAS07021.1"/>
    <property type="molecule type" value="mRNA"/>
</dbReference>
<dbReference type="EMBL" id="BC137592">
    <property type="protein sequence ID" value="AAI37593.1"/>
    <property type="molecule type" value="mRNA"/>
</dbReference>
<dbReference type="CCDS" id="CCDS85052.1">
    <molecule id="Q60748-1"/>
</dbReference>
<dbReference type="CCDS" id="CCDS85053.1">
    <molecule id="Q60748-2"/>
</dbReference>
<dbReference type="PIR" id="A56726">
    <property type="entry name" value="A56726"/>
</dbReference>
<dbReference type="PIR" id="I49149">
    <property type="entry name" value="I49149"/>
</dbReference>
<dbReference type="PIR" id="I49279">
    <property type="entry name" value="I49279"/>
</dbReference>
<dbReference type="RefSeq" id="NP_001275548.1">
    <molecule id="Q60748-1"/>
    <property type="nucleotide sequence ID" value="NM_001288619.1"/>
</dbReference>
<dbReference type="PDB" id="1U34">
    <property type="method" value="NMR"/>
    <property type="chains" value="A=35-113"/>
</dbReference>
<dbReference type="PDB" id="2JNC">
    <property type="method" value="NMR"/>
    <property type="chains" value="A=35-113"/>
</dbReference>
<dbReference type="PDB" id="2JND">
    <property type="method" value="NMR"/>
    <property type="chains" value="A=35-113"/>
</dbReference>
<dbReference type="PDBsum" id="1U34"/>
<dbReference type="PDBsum" id="2JNC"/>
<dbReference type="PDBsum" id="2JND"/>
<dbReference type="SMR" id="Q60748"/>
<dbReference type="BioGRID" id="198882">
    <property type="interactions" value="5"/>
</dbReference>
<dbReference type="DIP" id="DIP-61295N"/>
<dbReference type="FunCoup" id="Q60748">
    <property type="interactions" value="594"/>
</dbReference>
<dbReference type="IntAct" id="Q60748">
    <property type="interactions" value="1"/>
</dbReference>
<dbReference type="STRING" id="10090.ENSMUSP00000148408"/>
<dbReference type="BindingDB" id="Q60748"/>
<dbReference type="ChEMBL" id="CHEMBL2253"/>
<dbReference type="DrugCentral" id="Q60748"/>
<dbReference type="GuidetoPHARMACOLOGY" id="213"/>
<dbReference type="GlyCosmos" id="Q60748">
    <property type="glycosylation" value="5 sites, No reported glycans"/>
</dbReference>
<dbReference type="GlyGen" id="Q60748">
    <property type="glycosylation" value="5 sites"/>
</dbReference>
<dbReference type="iPTMnet" id="Q60748"/>
<dbReference type="PhosphoSitePlus" id="Q60748"/>
<dbReference type="PaxDb" id="10090-ENSMUSP00000003568"/>
<dbReference type="Antibodypedia" id="12618">
    <property type="antibodies" value="641 antibodies from 36 providers"/>
</dbReference>
<dbReference type="DNASU" id="12922"/>
<dbReference type="Ensembl" id="ENSMUST00000213026.2">
    <molecule id="Q60748-1"/>
    <property type="protein sequence ID" value="ENSMUSP00000148297.2"/>
    <property type="gene ID" value="ENSMUSG00000003476.17"/>
</dbReference>
<dbReference type="GeneID" id="12922"/>
<dbReference type="KEGG" id="mmu:12922"/>
<dbReference type="UCSC" id="uc009caj.3">
    <molecule id="Q60748-1"/>
    <property type="organism name" value="mouse"/>
</dbReference>
<dbReference type="UCSC" id="uc009cal.3">
    <molecule id="Q60748-2"/>
    <property type="organism name" value="mouse"/>
</dbReference>
<dbReference type="AGR" id="MGI:894312"/>
<dbReference type="CTD" id="1395"/>
<dbReference type="MGI" id="MGI:894312">
    <property type="gene designation" value="Crhr2"/>
</dbReference>
<dbReference type="VEuPathDB" id="HostDB:ENSMUSG00000003476"/>
<dbReference type="eggNOG" id="KOG4564">
    <property type="taxonomic scope" value="Eukaryota"/>
</dbReference>
<dbReference type="GeneTree" id="ENSGT00940000156795"/>
<dbReference type="InParanoid" id="Q60748"/>
<dbReference type="OMA" id="RINYSHC"/>
<dbReference type="OrthoDB" id="6022368at2759"/>
<dbReference type="Reactome" id="R-MMU-373080">
    <property type="pathway name" value="Class B/2 (Secretin family receptors)"/>
</dbReference>
<dbReference type="Reactome" id="R-MMU-418555">
    <property type="pathway name" value="G alpha (s) signalling events"/>
</dbReference>
<dbReference type="BioGRID-ORCS" id="12922">
    <property type="hits" value="1 hit in 60 CRISPR screens"/>
</dbReference>
<dbReference type="ChiTaRS" id="Crhr2">
    <property type="organism name" value="mouse"/>
</dbReference>
<dbReference type="EvolutionaryTrace" id="Q60748"/>
<dbReference type="PRO" id="PR:Q60748"/>
<dbReference type="Proteomes" id="UP000000589">
    <property type="component" value="Chromosome 6"/>
</dbReference>
<dbReference type="RNAct" id="Q60748">
    <property type="molecule type" value="protein"/>
</dbReference>
<dbReference type="Bgee" id="ENSMUSG00000003476">
    <property type="expression patterns" value="Expressed in hindlimb stylopod muscle and 95 other cell types or tissues"/>
</dbReference>
<dbReference type="ExpressionAtlas" id="Q60748">
    <property type="expression patterns" value="baseline and differential"/>
</dbReference>
<dbReference type="GO" id="GO:0009986">
    <property type="term" value="C:cell surface"/>
    <property type="evidence" value="ECO:0000314"/>
    <property type="project" value="MGI"/>
</dbReference>
<dbReference type="GO" id="GO:0005886">
    <property type="term" value="C:plasma membrane"/>
    <property type="evidence" value="ECO:0007669"/>
    <property type="project" value="UniProtKB-SubCell"/>
</dbReference>
<dbReference type="GO" id="GO:0015056">
    <property type="term" value="F:corticotrophin-releasing factor receptor activity"/>
    <property type="evidence" value="ECO:0000314"/>
    <property type="project" value="MGI"/>
</dbReference>
<dbReference type="GO" id="GO:0005179">
    <property type="term" value="F:hormone activity"/>
    <property type="evidence" value="ECO:0000314"/>
    <property type="project" value="MGI"/>
</dbReference>
<dbReference type="GO" id="GO:0007166">
    <property type="term" value="P:cell surface receptor signaling pathway"/>
    <property type="evidence" value="ECO:0007669"/>
    <property type="project" value="InterPro"/>
</dbReference>
<dbReference type="GO" id="GO:0007186">
    <property type="term" value="P:G protein-coupled receptor signaling pathway"/>
    <property type="evidence" value="ECO:0000314"/>
    <property type="project" value="MGI"/>
</dbReference>
<dbReference type="GO" id="GO:0016525">
    <property type="term" value="P:negative regulation of angiogenesis"/>
    <property type="evidence" value="ECO:0000315"/>
    <property type="project" value="MGI"/>
</dbReference>
<dbReference type="GO" id="GO:0106071">
    <property type="term" value="P:positive regulation of adenylate cyclase-activating G protein-coupled receptor signaling pathway"/>
    <property type="evidence" value="ECO:0000314"/>
    <property type="project" value="MGI"/>
</dbReference>
<dbReference type="FunFam" id="1.20.1070.10:FF:000021">
    <property type="entry name" value="Corticotropin releasing factor receptor 2"/>
    <property type="match status" value="1"/>
</dbReference>
<dbReference type="FunFam" id="4.10.1240.10:FF:000006">
    <property type="entry name" value="corticotropin-releasing factor receptor 2 isoform X2"/>
    <property type="match status" value="1"/>
</dbReference>
<dbReference type="Gene3D" id="4.10.1240.10">
    <property type="entry name" value="GPCR, family 2, extracellular hormone receptor domain"/>
    <property type="match status" value="1"/>
</dbReference>
<dbReference type="Gene3D" id="1.20.1070.10">
    <property type="entry name" value="Rhodopsin 7-helix transmembrane proteins"/>
    <property type="match status" value="1"/>
</dbReference>
<dbReference type="InterPro" id="IPR050332">
    <property type="entry name" value="GPCR_2"/>
</dbReference>
<dbReference type="InterPro" id="IPR017981">
    <property type="entry name" value="GPCR_2-like_7TM"/>
</dbReference>
<dbReference type="InterPro" id="IPR003053">
    <property type="entry name" value="GPCR_2_CRF2_rcpt"/>
</dbReference>
<dbReference type="InterPro" id="IPR003051">
    <property type="entry name" value="GPCR_2_CRF_rcpt"/>
</dbReference>
<dbReference type="InterPro" id="IPR036445">
    <property type="entry name" value="GPCR_2_extracell_dom_sf"/>
</dbReference>
<dbReference type="InterPro" id="IPR001879">
    <property type="entry name" value="GPCR_2_extracellular_dom"/>
</dbReference>
<dbReference type="InterPro" id="IPR000832">
    <property type="entry name" value="GPCR_2_secretin-like"/>
</dbReference>
<dbReference type="InterPro" id="IPR017983">
    <property type="entry name" value="GPCR_2_secretin-like_CS"/>
</dbReference>
<dbReference type="PANTHER" id="PTHR45620:SF19">
    <property type="entry name" value="CORTICOTROPIN-RELEASING FACTOR RECEPTOR 2"/>
    <property type="match status" value="1"/>
</dbReference>
<dbReference type="PANTHER" id="PTHR45620">
    <property type="entry name" value="PDF RECEPTOR-LIKE PROTEIN-RELATED"/>
    <property type="match status" value="1"/>
</dbReference>
<dbReference type="Pfam" id="PF00002">
    <property type="entry name" value="7tm_2"/>
    <property type="match status" value="1"/>
</dbReference>
<dbReference type="Pfam" id="PF02793">
    <property type="entry name" value="HRM"/>
    <property type="match status" value="1"/>
</dbReference>
<dbReference type="PRINTS" id="PR01279">
    <property type="entry name" value="CRFRECEPTOR"/>
</dbReference>
<dbReference type="PRINTS" id="PR01281">
    <property type="entry name" value="CRFRECEPTOR2"/>
</dbReference>
<dbReference type="PRINTS" id="PR00249">
    <property type="entry name" value="GPCRSECRETIN"/>
</dbReference>
<dbReference type="SMART" id="SM00008">
    <property type="entry name" value="HormR"/>
    <property type="match status" value="1"/>
</dbReference>
<dbReference type="SUPFAM" id="SSF81321">
    <property type="entry name" value="Family A G protein-coupled receptor-like"/>
    <property type="match status" value="1"/>
</dbReference>
<dbReference type="SUPFAM" id="SSF111418">
    <property type="entry name" value="Hormone receptor domain"/>
    <property type="match status" value="1"/>
</dbReference>
<dbReference type="PROSITE" id="PS00649">
    <property type="entry name" value="G_PROTEIN_RECEP_F2_1"/>
    <property type="match status" value="1"/>
</dbReference>
<dbReference type="PROSITE" id="PS00650">
    <property type="entry name" value="G_PROTEIN_RECEP_F2_2"/>
    <property type="match status" value="1"/>
</dbReference>
<dbReference type="PROSITE" id="PS50227">
    <property type="entry name" value="G_PROTEIN_RECEP_F2_3"/>
    <property type="match status" value="1"/>
</dbReference>
<dbReference type="PROSITE" id="PS50261">
    <property type="entry name" value="G_PROTEIN_RECEP_F2_4"/>
    <property type="match status" value="1"/>
</dbReference>